<dbReference type="EMBL" id="AP008232">
    <property type="protein sequence ID" value="BAE75305.1"/>
    <property type="molecule type" value="Genomic_DNA"/>
</dbReference>
<dbReference type="SMR" id="Q2NRC0"/>
<dbReference type="STRING" id="343509.SG2030"/>
<dbReference type="KEGG" id="sgl:SG2030"/>
<dbReference type="eggNOG" id="COG1872">
    <property type="taxonomic scope" value="Bacteria"/>
</dbReference>
<dbReference type="HOGENOM" id="CLU_130694_5_0_6"/>
<dbReference type="Proteomes" id="UP000001932">
    <property type="component" value="Chromosome"/>
</dbReference>
<dbReference type="GO" id="GO:0005737">
    <property type="term" value="C:cytoplasm"/>
    <property type="evidence" value="ECO:0007669"/>
    <property type="project" value="TreeGrafter"/>
</dbReference>
<dbReference type="Gene3D" id="3.30.1200.10">
    <property type="entry name" value="YggU-like"/>
    <property type="match status" value="1"/>
</dbReference>
<dbReference type="HAMAP" id="MF_00634">
    <property type="entry name" value="UPF0235"/>
    <property type="match status" value="1"/>
</dbReference>
<dbReference type="InterPro" id="IPR003746">
    <property type="entry name" value="DUF167"/>
</dbReference>
<dbReference type="InterPro" id="IPR036591">
    <property type="entry name" value="YggU-like_sf"/>
</dbReference>
<dbReference type="NCBIfam" id="TIGR00251">
    <property type="entry name" value="DUF167 family protein"/>
    <property type="match status" value="1"/>
</dbReference>
<dbReference type="NCBIfam" id="NF003466">
    <property type="entry name" value="PRK05090.1"/>
    <property type="match status" value="1"/>
</dbReference>
<dbReference type="PANTHER" id="PTHR13420">
    <property type="entry name" value="UPF0235 PROTEIN C15ORF40"/>
    <property type="match status" value="1"/>
</dbReference>
<dbReference type="PANTHER" id="PTHR13420:SF7">
    <property type="entry name" value="UPF0235 PROTEIN C15ORF40"/>
    <property type="match status" value="1"/>
</dbReference>
<dbReference type="Pfam" id="PF02594">
    <property type="entry name" value="DUF167"/>
    <property type="match status" value="1"/>
</dbReference>
<dbReference type="SMART" id="SM01152">
    <property type="entry name" value="DUF167"/>
    <property type="match status" value="1"/>
</dbReference>
<dbReference type="SUPFAM" id="SSF69786">
    <property type="entry name" value="YggU-like"/>
    <property type="match status" value="1"/>
</dbReference>
<accession>Q2NRC0</accession>
<feature type="chain" id="PRO_1000130715" description="UPF0235 protein SG2030">
    <location>
        <begin position="1"/>
        <end position="101"/>
    </location>
</feature>
<protein>
    <recommendedName>
        <fullName evidence="1">UPF0235 protein SG2030</fullName>
    </recommendedName>
</protein>
<reference key="1">
    <citation type="journal article" date="2006" name="Genome Res.">
        <title>Massive genome erosion and functional adaptations provide insights into the symbiotic lifestyle of Sodalis glossinidius in the tsetse host.</title>
        <authorList>
            <person name="Toh H."/>
            <person name="Weiss B.L."/>
            <person name="Perkin S.A.H."/>
            <person name="Yamashita A."/>
            <person name="Oshima K."/>
            <person name="Hattori M."/>
            <person name="Aksoy S."/>
        </authorList>
    </citation>
    <scope>NUCLEOTIDE SEQUENCE [LARGE SCALE GENOMIC DNA]</scope>
    <source>
        <strain>morsitans</strain>
    </source>
</reference>
<sequence>MVSPVIDVWREGDVLVLRLYIQPRASRDHIAGAHGDEIKVAITAPPVDGQANSHLIRFLAKEFGVAKSRVILEKGELGRHKQLRIDQPRQLPEVIARLLDV</sequence>
<proteinExistence type="inferred from homology"/>
<comment type="similarity">
    <text evidence="1">Belongs to the UPF0235 family.</text>
</comment>
<organism>
    <name type="scientific">Sodalis glossinidius (strain morsitans)</name>
    <dbReference type="NCBI Taxonomy" id="343509"/>
    <lineage>
        <taxon>Bacteria</taxon>
        <taxon>Pseudomonadati</taxon>
        <taxon>Pseudomonadota</taxon>
        <taxon>Gammaproteobacteria</taxon>
        <taxon>Enterobacterales</taxon>
        <taxon>Bruguierivoracaceae</taxon>
        <taxon>Sodalis</taxon>
    </lineage>
</organism>
<gene>
    <name type="ordered locus">SG2030</name>
</gene>
<name>Y2030_SODGM</name>
<evidence type="ECO:0000255" key="1">
    <source>
        <dbReference type="HAMAP-Rule" id="MF_00634"/>
    </source>
</evidence>